<gene>
    <name evidence="1" type="primary">nadK</name>
    <name type="ordered locus">STH1837</name>
</gene>
<protein>
    <recommendedName>
        <fullName evidence="1">NAD kinase</fullName>
        <ecNumber evidence="1">2.7.1.23</ecNumber>
    </recommendedName>
    <alternativeName>
        <fullName evidence="1">ATP-dependent NAD kinase</fullName>
    </alternativeName>
</protein>
<proteinExistence type="inferred from homology"/>
<sequence>MPKYALVINEDKPMAVTTGEEILQRLEASGAAVLLHPAAAGRLGRPDLAAPEGPAWGEVDMLIVLGGDGTLIRAVQRVAPYGVPVLGINTGHLGFLTAMESGDALAELDRVLAGSYLLEERMMLEATVVRDGLALATMPALNDAVISKGPRARMVHLEVSVGETVVARYRADGVIVATPTGSTAYSLSAGGPVVEPTVDCLLVTPICPHTMSARSIVVGADVALAIRVAASPGEVGLSADGSDPFPLLPGDVVRVGRAPYTARLVRLPGYRFYDVLRQKLSGT</sequence>
<accession>Q67NC1</accession>
<dbReference type="EC" id="2.7.1.23" evidence="1"/>
<dbReference type="EMBL" id="AP006840">
    <property type="protein sequence ID" value="BAD40822.1"/>
    <property type="molecule type" value="Genomic_DNA"/>
</dbReference>
<dbReference type="RefSeq" id="WP_011195965.1">
    <property type="nucleotide sequence ID" value="NC_006177.1"/>
</dbReference>
<dbReference type="SMR" id="Q67NC1"/>
<dbReference type="STRING" id="292459.STH1837"/>
<dbReference type="KEGG" id="sth:STH1837"/>
<dbReference type="eggNOG" id="COG0061">
    <property type="taxonomic scope" value="Bacteria"/>
</dbReference>
<dbReference type="HOGENOM" id="CLU_008831_0_0_9"/>
<dbReference type="OrthoDB" id="9774737at2"/>
<dbReference type="Proteomes" id="UP000000417">
    <property type="component" value="Chromosome"/>
</dbReference>
<dbReference type="GO" id="GO:0005737">
    <property type="term" value="C:cytoplasm"/>
    <property type="evidence" value="ECO:0007669"/>
    <property type="project" value="UniProtKB-SubCell"/>
</dbReference>
<dbReference type="GO" id="GO:0005524">
    <property type="term" value="F:ATP binding"/>
    <property type="evidence" value="ECO:0007669"/>
    <property type="project" value="UniProtKB-KW"/>
</dbReference>
<dbReference type="GO" id="GO:0046872">
    <property type="term" value="F:metal ion binding"/>
    <property type="evidence" value="ECO:0007669"/>
    <property type="project" value="UniProtKB-UniRule"/>
</dbReference>
<dbReference type="GO" id="GO:0051287">
    <property type="term" value="F:NAD binding"/>
    <property type="evidence" value="ECO:0007669"/>
    <property type="project" value="UniProtKB-ARBA"/>
</dbReference>
<dbReference type="GO" id="GO:0003951">
    <property type="term" value="F:NAD+ kinase activity"/>
    <property type="evidence" value="ECO:0007669"/>
    <property type="project" value="UniProtKB-UniRule"/>
</dbReference>
<dbReference type="GO" id="GO:0019674">
    <property type="term" value="P:NAD metabolic process"/>
    <property type="evidence" value="ECO:0007669"/>
    <property type="project" value="InterPro"/>
</dbReference>
<dbReference type="GO" id="GO:0006741">
    <property type="term" value="P:NADP biosynthetic process"/>
    <property type="evidence" value="ECO:0007669"/>
    <property type="project" value="UniProtKB-UniRule"/>
</dbReference>
<dbReference type="Gene3D" id="3.40.50.10330">
    <property type="entry name" value="Probable inorganic polyphosphate/atp-NAD kinase, domain 1"/>
    <property type="match status" value="1"/>
</dbReference>
<dbReference type="Gene3D" id="2.60.200.30">
    <property type="entry name" value="Probable inorganic polyphosphate/atp-NAD kinase, domain 2"/>
    <property type="match status" value="1"/>
</dbReference>
<dbReference type="HAMAP" id="MF_00361">
    <property type="entry name" value="NAD_kinase"/>
    <property type="match status" value="1"/>
</dbReference>
<dbReference type="InterPro" id="IPR017438">
    <property type="entry name" value="ATP-NAD_kinase_N"/>
</dbReference>
<dbReference type="InterPro" id="IPR017437">
    <property type="entry name" value="ATP-NAD_kinase_PpnK-typ_C"/>
</dbReference>
<dbReference type="InterPro" id="IPR016064">
    <property type="entry name" value="NAD/diacylglycerol_kinase_sf"/>
</dbReference>
<dbReference type="InterPro" id="IPR002504">
    <property type="entry name" value="NADK"/>
</dbReference>
<dbReference type="PANTHER" id="PTHR20275">
    <property type="entry name" value="NAD KINASE"/>
    <property type="match status" value="1"/>
</dbReference>
<dbReference type="PANTHER" id="PTHR20275:SF0">
    <property type="entry name" value="NAD KINASE"/>
    <property type="match status" value="1"/>
</dbReference>
<dbReference type="Pfam" id="PF01513">
    <property type="entry name" value="NAD_kinase"/>
    <property type="match status" value="1"/>
</dbReference>
<dbReference type="Pfam" id="PF20143">
    <property type="entry name" value="NAD_kinase_C"/>
    <property type="match status" value="1"/>
</dbReference>
<dbReference type="SUPFAM" id="SSF111331">
    <property type="entry name" value="NAD kinase/diacylglycerol kinase-like"/>
    <property type="match status" value="1"/>
</dbReference>
<reference key="1">
    <citation type="journal article" date="2004" name="Nucleic Acids Res.">
        <title>Genome sequence of Symbiobacterium thermophilum, an uncultivable bacterium that depends on microbial commensalism.</title>
        <authorList>
            <person name="Ueda K."/>
            <person name="Yamashita A."/>
            <person name="Ishikawa J."/>
            <person name="Shimada M."/>
            <person name="Watsuji T."/>
            <person name="Morimura K."/>
            <person name="Ikeda H."/>
            <person name="Hattori M."/>
            <person name="Beppu T."/>
        </authorList>
    </citation>
    <scope>NUCLEOTIDE SEQUENCE [LARGE SCALE GENOMIC DNA]</scope>
    <source>
        <strain>DSM 24528 / JCM 14929 / IAM 14863 / T</strain>
    </source>
</reference>
<keyword id="KW-0067">ATP-binding</keyword>
<keyword id="KW-0963">Cytoplasm</keyword>
<keyword id="KW-0418">Kinase</keyword>
<keyword id="KW-0520">NAD</keyword>
<keyword id="KW-0521">NADP</keyword>
<keyword id="KW-0547">Nucleotide-binding</keyword>
<keyword id="KW-1185">Reference proteome</keyword>
<keyword id="KW-0808">Transferase</keyword>
<evidence type="ECO:0000255" key="1">
    <source>
        <dbReference type="HAMAP-Rule" id="MF_00361"/>
    </source>
</evidence>
<name>NADK_SYMTH</name>
<organism>
    <name type="scientific">Symbiobacterium thermophilum (strain DSM 24528 / JCM 14929 / IAM 14863 / T)</name>
    <dbReference type="NCBI Taxonomy" id="292459"/>
    <lineage>
        <taxon>Bacteria</taxon>
        <taxon>Bacillati</taxon>
        <taxon>Bacillota</taxon>
        <taxon>Clostridia</taxon>
        <taxon>Eubacteriales</taxon>
        <taxon>Symbiobacteriaceae</taxon>
        <taxon>Symbiobacterium</taxon>
    </lineage>
</organism>
<comment type="function">
    <text evidence="1">Involved in the regulation of the intracellular balance of NAD and NADP, and is a key enzyme in the biosynthesis of NADP. Catalyzes specifically the phosphorylation on 2'-hydroxyl of the adenosine moiety of NAD to yield NADP.</text>
</comment>
<comment type="catalytic activity">
    <reaction evidence="1">
        <text>NAD(+) + ATP = ADP + NADP(+) + H(+)</text>
        <dbReference type="Rhea" id="RHEA:18629"/>
        <dbReference type="ChEBI" id="CHEBI:15378"/>
        <dbReference type="ChEBI" id="CHEBI:30616"/>
        <dbReference type="ChEBI" id="CHEBI:57540"/>
        <dbReference type="ChEBI" id="CHEBI:58349"/>
        <dbReference type="ChEBI" id="CHEBI:456216"/>
        <dbReference type="EC" id="2.7.1.23"/>
    </reaction>
</comment>
<comment type="cofactor">
    <cofactor evidence="1">
        <name>a divalent metal cation</name>
        <dbReference type="ChEBI" id="CHEBI:60240"/>
    </cofactor>
</comment>
<comment type="subcellular location">
    <subcellularLocation>
        <location evidence="1">Cytoplasm</location>
    </subcellularLocation>
</comment>
<comment type="similarity">
    <text evidence="1">Belongs to the NAD kinase family.</text>
</comment>
<feature type="chain" id="PRO_0000229700" description="NAD kinase">
    <location>
        <begin position="1"/>
        <end position="283"/>
    </location>
</feature>
<feature type="active site" description="Proton acceptor" evidence="1">
    <location>
        <position position="68"/>
    </location>
</feature>
<feature type="binding site" evidence="1">
    <location>
        <begin position="68"/>
        <end position="69"/>
    </location>
    <ligand>
        <name>NAD(+)</name>
        <dbReference type="ChEBI" id="CHEBI:57540"/>
    </ligand>
</feature>
<feature type="binding site" evidence="1">
    <location>
        <position position="73"/>
    </location>
    <ligand>
        <name>NAD(+)</name>
        <dbReference type="ChEBI" id="CHEBI:57540"/>
    </ligand>
</feature>
<feature type="binding site" evidence="1">
    <location>
        <begin position="142"/>
        <end position="143"/>
    </location>
    <ligand>
        <name>NAD(+)</name>
        <dbReference type="ChEBI" id="CHEBI:57540"/>
    </ligand>
</feature>
<feature type="binding site" evidence="1">
    <location>
        <position position="153"/>
    </location>
    <ligand>
        <name>NAD(+)</name>
        <dbReference type="ChEBI" id="CHEBI:57540"/>
    </ligand>
</feature>
<feature type="binding site" evidence="1">
    <location>
        <position position="170"/>
    </location>
    <ligand>
        <name>NAD(+)</name>
        <dbReference type="ChEBI" id="CHEBI:57540"/>
    </ligand>
</feature>
<feature type="binding site" evidence="1">
    <location>
        <position position="172"/>
    </location>
    <ligand>
        <name>NAD(+)</name>
        <dbReference type="ChEBI" id="CHEBI:57540"/>
    </ligand>
</feature>
<feature type="binding site" evidence="1">
    <location>
        <begin position="183"/>
        <end position="188"/>
    </location>
    <ligand>
        <name>NAD(+)</name>
        <dbReference type="ChEBI" id="CHEBI:57540"/>
    </ligand>
</feature>